<name>MUTL_PSEA8</name>
<gene>
    <name evidence="1" type="primary">mutL</name>
    <name type="ordered locus">PLES_53321</name>
</gene>
<evidence type="ECO:0000255" key="1">
    <source>
        <dbReference type="HAMAP-Rule" id="MF_00149"/>
    </source>
</evidence>
<evidence type="ECO:0000256" key="2">
    <source>
        <dbReference type="SAM" id="MobiDB-lite"/>
    </source>
</evidence>
<feature type="chain" id="PRO_1000192181" description="DNA mismatch repair protein MutL">
    <location>
        <begin position="1"/>
        <end position="633"/>
    </location>
</feature>
<feature type="region of interest" description="Disordered" evidence="2">
    <location>
        <begin position="337"/>
        <end position="364"/>
    </location>
</feature>
<feature type="region of interest" description="Disordered" evidence="2">
    <location>
        <begin position="383"/>
        <end position="405"/>
    </location>
</feature>
<feature type="compositionally biased region" description="Gly residues" evidence="2">
    <location>
        <begin position="385"/>
        <end position="396"/>
    </location>
</feature>
<accession>B7V209</accession>
<proteinExistence type="inferred from homology"/>
<keyword id="KW-0227">DNA damage</keyword>
<keyword id="KW-0234">DNA repair</keyword>
<comment type="function">
    <text evidence="1">This protein is involved in the repair of mismatches in DNA. It is required for dam-dependent methyl-directed DNA mismatch repair. May act as a 'molecular matchmaker', a protein that promotes the formation of a stable complex between two or more DNA-binding proteins in an ATP-dependent manner without itself being part of a final effector complex.</text>
</comment>
<comment type="similarity">
    <text evidence="1">Belongs to the DNA mismatch repair MutL/HexB family.</text>
</comment>
<protein>
    <recommendedName>
        <fullName evidence="1">DNA mismatch repair protein MutL</fullName>
    </recommendedName>
</protein>
<dbReference type="EMBL" id="FM209186">
    <property type="protein sequence ID" value="CAW30086.1"/>
    <property type="molecule type" value="Genomic_DNA"/>
</dbReference>
<dbReference type="RefSeq" id="WP_003106411.1">
    <property type="nucleotide sequence ID" value="NC_011770.1"/>
</dbReference>
<dbReference type="SMR" id="B7V209"/>
<dbReference type="KEGG" id="pag:PLES_53321"/>
<dbReference type="HOGENOM" id="CLU_004131_4_2_6"/>
<dbReference type="GO" id="GO:0032300">
    <property type="term" value="C:mismatch repair complex"/>
    <property type="evidence" value="ECO:0007669"/>
    <property type="project" value="InterPro"/>
</dbReference>
<dbReference type="GO" id="GO:0005524">
    <property type="term" value="F:ATP binding"/>
    <property type="evidence" value="ECO:0007669"/>
    <property type="project" value="InterPro"/>
</dbReference>
<dbReference type="GO" id="GO:0016887">
    <property type="term" value="F:ATP hydrolysis activity"/>
    <property type="evidence" value="ECO:0007669"/>
    <property type="project" value="InterPro"/>
</dbReference>
<dbReference type="GO" id="GO:0140664">
    <property type="term" value="F:ATP-dependent DNA damage sensor activity"/>
    <property type="evidence" value="ECO:0007669"/>
    <property type="project" value="InterPro"/>
</dbReference>
<dbReference type="GO" id="GO:0030983">
    <property type="term" value="F:mismatched DNA binding"/>
    <property type="evidence" value="ECO:0007669"/>
    <property type="project" value="InterPro"/>
</dbReference>
<dbReference type="GO" id="GO:0006298">
    <property type="term" value="P:mismatch repair"/>
    <property type="evidence" value="ECO:0007669"/>
    <property type="project" value="UniProtKB-UniRule"/>
</dbReference>
<dbReference type="CDD" id="cd16926">
    <property type="entry name" value="HATPase_MutL-MLH-PMS-like"/>
    <property type="match status" value="1"/>
</dbReference>
<dbReference type="CDD" id="cd03482">
    <property type="entry name" value="MutL_Trans_MutL"/>
    <property type="match status" value="1"/>
</dbReference>
<dbReference type="FunFam" id="3.30.230.10:FF:000013">
    <property type="entry name" value="DNA mismatch repair endonuclease MutL"/>
    <property type="match status" value="1"/>
</dbReference>
<dbReference type="FunFam" id="3.30.565.10:FF:000003">
    <property type="entry name" value="DNA mismatch repair endonuclease MutL"/>
    <property type="match status" value="1"/>
</dbReference>
<dbReference type="FunFam" id="3.30.1370.100:FF:000005">
    <property type="entry name" value="DNA mismatch repair protein MutL"/>
    <property type="match status" value="1"/>
</dbReference>
<dbReference type="Gene3D" id="3.30.230.10">
    <property type="match status" value="1"/>
</dbReference>
<dbReference type="Gene3D" id="3.30.565.10">
    <property type="entry name" value="Histidine kinase-like ATPase, C-terminal domain"/>
    <property type="match status" value="1"/>
</dbReference>
<dbReference type="Gene3D" id="3.30.1540.20">
    <property type="entry name" value="MutL, C-terminal domain, dimerisation subdomain"/>
    <property type="match status" value="1"/>
</dbReference>
<dbReference type="Gene3D" id="3.30.1370.100">
    <property type="entry name" value="MutL, C-terminal domain, regulatory subdomain"/>
    <property type="match status" value="1"/>
</dbReference>
<dbReference type="HAMAP" id="MF_00149">
    <property type="entry name" value="DNA_mis_repair"/>
    <property type="match status" value="1"/>
</dbReference>
<dbReference type="InterPro" id="IPR014762">
    <property type="entry name" value="DNA_mismatch_repair_CS"/>
</dbReference>
<dbReference type="InterPro" id="IPR020667">
    <property type="entry name" value="DNA_mismatch_repair_MutL"/>
</dbReference>
<dbReference type="InterPro" id="IPR013507">
    <property type="entry name" value="DNA_mismatch_S5_2-like"/>
</dbReference>
<dbReference type="InterPro" id="IPR036890">
    <property type="entry name" value="HATPase_C_sf"/>
</dbReference>
<dbReference type="InterPro" id="IPR002099">
    <property type="entry name" value="MutL/Mlh/PMS"/>
</dbReference>
<dbReference type="InterPro" id="IPR038973">
    <property type="entry name" value="MutL/Mlh/Pms-like"/>
</dbReference>
<dbReference type="InterPro" id="IPR014790">
    <property type="entry name" value="MutL_C"/>
</dbReference>
<dbReference type="InterPro" id="IPR042120">
    <property type="entry name" value="MutL_C_dimsub"/>
</dbReference>
<dbReference type="InterPro" id="IPR042121">
    <property type="entry name" value="MutL_C_regsub"/>
</dbReference>
<dbReference type="InterPro" id="IPR037198">
    <property type="entry name" value="MutL_C_sf"/>
</dbReference>
<dbReference type="InterPro" id="IPR020568">
    <property type="entry name" value="Ribosomal_Su5_D2-typ_SF"/>
</dbReference>
<dbReference type="InterPro" id="IPR014721">
    <property type="entry name" value="Ribsml_uS5_D2-typ_fold_subgr"/>
</dbReference>
<dbReference type="NCBIfam" id="TIGR00585">
    <property type="entry name" value="mutl"/>
    <property type="match status" value="1"/>
</dbReference>
<dbReference type="NCBIfam" id="NF000949">
    <property type="entry name" value="PRK00095.1-2"/>
    <property type="match status" value="1"/>
</dbReference>
<dbReference type="PANTHER" id="PTHR10073">
    <property type="entry name" value="DNA MISMATCH REPAIR PROTEIN MLH, PMS, MUTL"/>
    <property type="match status" value="1"/>
</dbReference>
<dbReference type="PANTHER" id="PTHR10073:SF12">
    <property type="entry name" value="DNA MISMATCH REPAIR PROTEIN MLH1"/>
    <property type="match status" value="1"/>
</dbReference>
<dbReference type="Pfam" id="PF01119">
    <property type="entry name" value="DNA_mis_repair"/>
    <property type="match status" value="1"/>
</dbReference>
<dbReference type="Pfam" id="PF13589">
    <property type="entry name" value="HATPase_c_3"/>
    <property type="match status" value="1"/>
</dbReference>
<dbReference type="Pfam" id="PF08676">
    <property type="entry name" value="MutL_C"/>
    <property type="match status" value="1"/>
</dbReference>
<dbReference type="SMART" id="SM01340">
    <property type="entry name" value="DNA_mis_repair"/>
    <property type="match status" value="1"/>
</dbReference>
<dbReference type="SMART" id="SM00853">
    <property type="entry name" value="MutL_C"/>
    <property type="match status" value="1"/>
</dbReference>
<dbReference type="SUPFAM" id="SSF55874">
    <property type="entry name" value="ATPase domain of HSP90 chaperone/DNA topoisomerase II/histidine kinase"/>
    <property type="match status" value="1"/>
</dbReference>
<dbReference type="SUPFAM" id="SSF118116">
    <property type="entry name" value="DNA mismatch repair protein MutL"/>
    <property type="match status" value="1"/>
</dbReference>
<dbReference type="SUPFAM" id="SSF54211">
    <property type="entry name" value="Ribosomal protein S5 domain 2-like"/>
    <property type="match status" value="1"/>
</dbReference>
<dbReference type="PROSITE" id="PS00058">
    <property type="entry name" value="DNA_MISMATCH_REPAIR_1"/>
    <property type="match status" value="1"/>
</dbReference>
<reference key="1">
    <citation type="journal article" date="2009" name="Genome Res.">
        <title>Newly introduced genomic prophage islands are critical determinants of in vivo competitiveness in the Liverpool epidemic strain of Pseudomonas aeruginosa.</title>
        <authorList>
            <person name="Winstanley C."/>
            <person name="Langille M.G.I."/>
            <person name="Fothergill J.L."/>
            <person name="Kukavica-Ibrulj I."/>
            <person name="Paradis-Bleau C."/>
            <person name="Sanschagrin F."/>
            <person name="Thomson N.R."/>
            <person name="Winsor G.L."/>
            <person name="Quail M.A."/>
            <person name="Lennard N."/>
            <person name="Bignell A."/>
            <person name="Clarke L."/>
            <person name="Seeger K."/>
            <person name="Saunders D."/>
            <person name="Harris D."/>
            <person name="Parkhill J."/>
            <person name="Hancock R.E.W."/>
            <person name="Brinkman F.S.L."/>
            <person name="Levesque R.C."/>
        </authorList>
    </citation>
    <scope>NUCLEOTIDE SEQUENCE [LARGE SCALE GENOMIC DNA]</scope>
    <source>
        <strain>LESB58</strain>
    </source>
</reference>
<organism>
    <name type="scientific">Pseudomonas aeruginosa (strain LESB58)</name>
    <dbReference type="NCBI Taxonomy" id="557722"/>
    <lineage>
        <taxon>Bacteria</taxon>
        <taxon>Pseudomonadati</taxon>
        <taxon>Pseudomonadota</taxon>
        <taxon>Gammaproteobacteria</taxon>
        <taxon>Pseudomonadales</taxon>
        <taxon>Pseudomonadaceae</taxon>
        <taxon>Pseudomonas</taxon>
    </lineage>
</organism>
<sequence length="633" mass="69748">MSEAPRIQLLSPRLANQIAAGEVVERPASVAKELLENSLDAGSRRIDVEVEQGGIKLLRVRDDGRGIPADDLPLALARHATSKIRELEDLERVMSLGFRGEALASISSVARLTMTSRTADAGEAWQVETEGRDMQPRVQPAAHPVGTSVEVRDLFFNTPARRKFLRAEKTEFDHLQEVIKRLALARFDVAFHLRHNGKTIFALHEARDELARARRVGAVCGQAFLEQALPIEVERNGLHLWGWVGLPTFSRSQPDLQYFYVNGRMVRDKLVAHAVRQAYRDVLYNGRHPTFVLFFEVDPAVVDVNVHPTKHEVRFRDSRMVHDFLYGTLHRALGEVRPDDQLAPPGATSLTEPRPTGAAAGEFGPQGEMRLAESVLESPAARVGWSGGSSASGGSSGYSAYTRPEAPPSLAEAGGAYKAYFAPLPAGEAPAALPESAQDIPPLGYALAQLKGIYILAENAHGLVLVDMHAAHERITYERLKVAMASEGLRGQPLLVPESIAVSEREADCAEEHSSWFQRLGFELQRLGPESLAIRQIPALLKQAEATQLVRDVIADLLEYGTSDRIQAHLNELLGTMACHGAVRANRRLTLPEMNALLRDMEITERSGQCNHGRPTWTQLGLDELDKLFLRGR</sequence>